<dbReference type="EMBL" id="AB079132">
    <property type="protein sequence ID" value="BAB91237.1"/>
    <property type="molecule type" value="mRNA"/>
</dbReference>
<dbReference type="EMBL" id="AK048720">
    <property type="protein sequence ID" value="BAC33432.1"/>
    <property type="molecule type" value="mRNA"/>
</dbReference>
<dbReference type="EMBL" id="AK135838">
    <property type="protein sequence ID" value="BAE22686.1"/>
    <property type="molecule type" value="mRNA"/>
</dbReference>
<dbReference type="EMBL" id="BC023432">
    <property type="protein sequence ID" value="AAH23432.1"/>
    <property type="status" value="ALT_INIT"/>
    <property type="molecule type" value="mRNA"/>
</dbReference>
<dbReference type="CCDS" id="CCDS27816.1">
    <molecule id="Q8K1N4-1"/>
</dbReference>
<dbReference type="RefSeq" id="NP_001405593.1">
    <molecule id="Q8K1N4-1"/>
    <property type="nucleotide sequence ID" value="NM_001418664.1"/>
</dbReference>
<dbReference type="RefSeq" id="NP_001405594.1">
    <molecule id="Q8K1N4-1"/>
    <property type="nucleotide sequence ID" value="NM_001418665.1"/>
</dbReference>
<dbReference type="RefSeq" id="NP_631879.1">
    <molecule id="Q8K1N4-1"/>
    <property type="nucleotide sequence ID" value="NM_139140.2"/>
</dbReference>
<dbReference type="RefSeq" id="XP_011244039.1">
    <molecule id="Q8K1N4-1"/>
    <property type="nucleotide sequence ID" value="XM_011245737.1"/>
</dbReference>
<dbReference type="SMR" id="Q8K1N4"/>
<dbReference type="BioGRID" id="215446">
    <property type="interactions" value="10"/>
</dbReference>
<dbReference type="FunCoup" id="Q8K1N4">
    <property type="interactions" value="2506"/>
</dbReference>
<dbReference type="IntAct" id="Q8K1N4">
    <property type="interactions" value="2"/>
</dbReference>
<dbReference type="MINT" id="Q8K1N4"/>
<dbReference type="STRING" id="10090.ENSMUSP00000070549"/>
<dbReference type="GlyGen" id="Q8K1N4">
    <property type="glycosylation" value="1 site, 1 N-linked glycan (1 site)"/>
</dbReference>
<dbReference type="iPTMnet" id="Q8K1N4"/>
<dbReference type="PhosphoSitePlus" id="Q8K1N4"/>
<dbReference type="SwissPalm" id="Q8K1N4"/>
<dbReference type="PaxDb" id="10090-ENSMUSP00000070549"/>
<dbReference type="PeptideAtlas" id="Q8K1N4"/>
<dbReference type="ProteomicsDB" id="261566">
    <molecule id="Q8K1N4-1"/>
</dbReference>
<dbReference type="ProteomicsDB" id="261567">
    <molecule id="Q8K1N4-2"/>
</dbReference>
<dbReference type="Pumba" id="Q8K1N4"/>
<dbReference type="Antibodypedia" id="48974">
    <property type="antibodies" value="42 antibodies from 13 providers"/>
</dbReference>
<dbReference type="DNASU" id="72572"/>
<dbReference type="Ensembl" id="ENSMUST00000063517.6">
    <molecule id="Q8K1N4-1"/>
    <property type="protein sequence ID" value="ENSMUSP00000070549.5"/>
    <property type="gene ID" value="ENSMUSG00000051934.6"/>
</dbReference>
<dbReference type="GeneID" id="72572"/>
<dbReference type="KEGG" id="mmu:72572"/>
<dbReference type="UCSC" id="uc007xov.1">
    <molecule id="Q8K1N4-1"/>
    <property type="organism name" value="mouse"/>
</dbReference>
<dbReference type="UCSC" id="uc007xow.1">
    <molecule id="Q8K1N4-2"/>
    <property type="organism name" value="mouse"/>
</dbReference>
<dbReference type="AGR" id="MGI:1919822"/>
<dbReference type="CTD" id="65244"/>
<dbReference type="MGI" id="MGI:1919822">
    <property type="gene designation" value="Spats2"/>
</dbReference>
<dbReference type="VEuPathDB" id="HostDB:ENSMUSG00000051934"/>
<dbReference type="eggNOG" id="ENOG502QY9Y">
    <property type="taxonomic scope" value="Eukaryota"/>
</dbReference>
<dbReference type="GeneTree" id="ENSGT00390000001138"/>
<dbReference type="HOGENOM" id="CLU_037089_0_0_1"/>
<dbReference type="InParanoid" id="Q8K1N4"/>
<dbReference type="OMA" id="RNGPWYQ"/>
<dbReference type="OrthoDB" id="6136201at2759"/>
<dbReference type="PhylomeDB" id="Q8K1N4"/>
<dbReference type="TreeFam" id="TF320553"/>
<dbReference type="BioGRID-ORCS" id="72572">
    <property type="hits" value="3 hits in 79 CRISPR screens"/>
</dbReference>
<dbReference type="ChiTaRS" id="Spats2">
    <property type="organism name" value="mouse"/>
</dbReference>
<dbReference type="PRO" id="PR:Q8K1N4"/>
<dbReference type="Proteomes" id="UP000000589">
    <property type="component" value="Chromosome 15"/>
</dbReference>
<dbReference type="RNAct" id="Q8K1N4">
    <property type="molecule type" value="protein"/>
</dbReference>
<dbReference type="Bgee" id="ENSMUSG00000051934">
    <property type="expression patterns" value="Expressed in primary oocyte and 257 other cell types or tissues"/>
</dbReference>
<dbReference type="ExpressionAtlas" id="Q8K1N4">
    <property type="expression patterns" value="baseline and differential"/>
</dbReference>
<dbReference type="GO" id="GO:0005737">
    <property type="term" value="C:cytoplasm"/>
    <property type="evidence" value="ECO:0000314"/>
    <property type="project" value="MGI"/>
</dbReference>
<dbReference type="GO" id="GO:0005829">
    <property type="term" value="C:cytosol"/>
    <property type="evidence" value="ECO:0007669"/>
    <property type="project" value="Ensembl"/>
</dbReference>
<dbReference type="InterPro" id="IPR009816">
    <property type="entry name" value="SPATS2-like"/>
</dbReference>
<dbReference type="InterPro" id="IPR009060">
    <property type="entry name" value="UBA-like_sf"/>
</dbReference>
<dbReference type="PANTHER" id="PTHR15623:SF10">
    <property type="entry name" value="SPERMATOGENESIS-ASSOCIATED SERINE-RICH PROTEIN 2"/>
    <property type="match status" value="1"/>
</dbReference>
<dbReference type="PANTHER" id="PTHR15623">
    <property type="entry name" value="SPERMATOGENESIS-ASSOCIATED SERINE-RICH PROTEIN 2-RELATED"/>
    <property type="match status" value="1"/>
</dbReference>
<dbReference type="Pfam" id="PF07139">
    <property type="entry name" value="SPATS2-like"/>
    <property type="match status" value="1"/>
</dbReference>
<dbReference type="SUPFAM" id="SSF46934">
    <property type="entry name" value="UBA-like"/>
    <property type="match status" value="1"/>
</dbReference>
<organism>
    <name type="scientific">Mus musculus</name>
    <name type="common">Mouse</name>
    <dbReference type="NCBI Taxonomy" id="10090"/>
    <lineage>
        <taxon>Eukaryota</taxon>
        <taxon>Metazoa</taxon>
        <taxon>Chordata</taxon>
        <taxon>Craniata</taxon>
        <taxon>Vertebrata</taxon>
        <taxon>Euteleostomi</taxon>
        <taxon>Mammalia</taxon>
        <taxon>Eutheria</taxon>
        <taxon>Euarchontoglires</taxon>
        <taxon>Glires</taxon>
        <taxon>Rodentia</taxon>
        <taxon>Myomorpha</taxon>
        <taxon>Muroidea</taxon>
        <taxon>Muridae</taxon>
        <taxon>Murinae</taxon>
        <taxon>Mus</taxon>
        <taxon>Mus</taxon>
    </lineage>
</organism>
<keyword id="KW-0025">Alternative splicing</keyword>
<keyword id="KW-0963">Cytoplasm</keyword>
<keyword id="KW-0597">Phosphoprotein</keyword>
<keyword id="KW-1185">Reference proteome</keyword>
<sequence>MSRKQSQKDSSGFIFDLQSNTVLAQGGTFENMKEKINAVRAIVPNKSNNEIILVLQHFDNCVDKTVQAFMEGSASEVLKEWIVTGKKKNKKKKSKPKPASEASGSAPDSSKSAPIQEEQPASSEKGSINGYHVNGAINDAESVDSLSEGLETLSIDARELEDPEFAAAETLDRTGSVLENGVSDFEPKSLTAHSISNVQQSRNAAKSLSRTTPGAQVSNLGMENVPLSSTNKKLGSNIEKSVKDLQRCTVSLARYRVVVKEEMDASIKKMKQAFAELQSCLMDREVALLAEMDKVKAEAMEILLSRQKKAELLKKMTDVAVRMSEEQLVELRADIKHFVSERKYDEDLGRVARFTCDVETLKQSIDSFGQVSHPKNSYSTRSRCSLVAPVSLSGPSDGSAASSSPDASVPSLPGANKRNCAPREASAAMTNSSDRPCQAHREVFPGNRRGGQGYRAQSQKTADPSNPGRHDSVGRYRNSSWYSSGPRYQGVPPQAPGNAGERSRPYSAGTNGTGAISEPSPPKPSFKKGLPQRKPRASQAEAANS</sequence>
<evidence type="ECO:0000250" key="1">
    <source>
        <dbReference type="UniProtKB" id="Q86XZ4"/>
    </source>
</evidence>
<evidence type="ECO:0000256" key="2">
    <source>
        <dbReference type="SAM" id="MobiDB-lite"/>
    </source>
</evidence>
<evidence type="ECO:0000269" key="3">
    <source>
    </source>
</evidence>
<evidence type="ECO:0000303" key="4">
    <source>
    </source>
</evidence>
<evidence type="ECO:0000305" key="5"/>
<evidence type="ECO:0007744" key="6">
    <source>
    </source>
</evidence>
<protein>
    <recommendedName>
        <fullName>Spermatogenesis-associated serine-rich protein 2</fullName>
    </recommendedName>
    <alternativeName>
        <fullName>Serine-rich spermatocytes and round spermatid 59 kDa protein</fullName>
    </alternativeName>
    <alternativeName>
        <fullName>p59scr</fullName>
    </alternativeName>
</protein>
<name>SPAS2_MOUSE</name>
<proteinExistence type="evidence at protein level"/>
<reference key="1">
    <citation type="journal article" date="2002" name="Biochem. Biophys. Res. Commun.">
        <title>Identification of a novel protein p59(scr), which is expressed at specific stages of mouse spermatogenesis.</title>
        <authorList>
            <person name="Senoo M."/>
            <person name="Hoshino S."/>
            <person name="Mochida N."/>
            <person name="Matsumura Y."/>
            <person name="Habu S."/>
        </authorList>
    </citation>
    <scope>NUCLEOTIDE SEQUENCE [MRNA] (ISOFORM 1)</scope>
    <scope>SUBCELLULAR LOCATION</scope>
    <scope>DEVELOPMENTAL STAGE</scope>
    <scope>TISSUE SPECIFICITY</scope>
    <source>
        <tissue>Testis</tissue>
    </source>
</reference>
<reference key="2">
    <citation type="journal article" date="2005" name="Science">
        <title>The transcriptional landscape of the mammalian genome.</title>
        <authorList>
            <person name="Carninci P."/>
            <person name="Kasukawa T."/>
            <person name="Katayama S."/>
            <person name="Gough J."/>
            <person name="Frith M.C."/>
            <person name="Maeda N."/>
            <person name="Oyama R."/>
            <person name="Ravasi T."/>
            <person name="Lenhard B."/>
            <person name="Wells C."/>
            <person name="Kodzius R."/>
            <person name="Shimokawa K."/>
            <person name="Bajic V.B."/>
            <person name="Brenner S.E."/>
            <person name="Batalov S."/>
            <person name="Forrest A.R."/>
            <person name="Zavolan M."/>
            <person name="Davis M.J."/>
            <person name="Wilming L.G."/>
            <person name="Aidinis V."/>
            <person name="Allen J.E."/>
            <person name="Ambesi-Impiombato A."/>
            <person name="Apweiler R."/>
            <person name="Aturaliya R.N."/>
            <person name="Bailey T.L."/>
            <person name="Bansal M."/>
            <person name="Baxter L."/>
            <person name="Beisel K.W."/>
            <person name="Bersano T."/>
            <person name="Bono H."/>
            <person name="Chalk A.M."/>
            <person name="Chiu K.P."/>
            <person name="Choudhary V."/>
            <person name="Christoffels A."/>
            <person name="Clutterbuck D.R."/>
            <person name="Crowe M.L."/>
            <person name="Dalla E."/>
            <person name="Dalrymple B.P."/>
            <person name="de Bono B."/>
            <person name="Della Gatta G."/>
            <person name="di Bernardo D."/>
            <person name="Down T."/>
            <person name="Engstrom P."/>
            <person name="Fagiolini M."/>
            <person name="Faulkner G."/>
            <person name="Fletcher C.F."/>
            <person name="Fukushima T."/>
            <person name="Furuno M."/>
            <person name="Futaki S."/>
            <person name="Gariboldi M."/>
            <person name="Georgii-Hemming P."/>
            <person name="Gingeras T.R."/>
            <person name="Gojobori T."/>
            <person name="Green R.E."/>
            <person name="Gustincich S."/>
            <person name="Harbers M."/>
            <person name="Hayashi Y."/>
            <person name="Hensch T.K."/>
            <person name="Hirokawa N."/>
            <person name="Hill D."/>
            <person name="Huminiecki L."/>
            <person name="Iacono M."/>
            <person name="Ikeo K."/>
            <person name="Iwama A."/>
            <person name="Ishikawa T."/>
            <person name="Jakt M."/>
            <person name="Kanapin A."/>
            <person name="Katoh M."/>
            <person name="Kawasawa Y."/>
            <person name="Kelso J."/>
            <person name="Kitamura H."/>
            <person name="Kitano H."/>
            <person name="Kollias G."/>
            <person name="Krishnan S.P."/>
            <person name="Kruger A."/>
            <person name="Kummerfeld S.K."/>
            <person name="Kurochkin I.V."/>
            <person name="Lareau L.F."/>
            <person name="Lazarevic D."/>
            <person name="Lipovich L."/>
            <person name="Liu J."/>
            <person name="Liuni S."/>
            <person name="McWilliam S."/>
            <person name="Madan Babu M."/>
            <person name="Madera M."/>
            <person name="Marchionni L."/>
            <person name="Matsuda H."/>
            <person name="Matsuzawa S."/>
            <person name="Miki H."/>
            <person name="Mignone F."/>
            <person name="Miyake S."/>
            <person name="Morris K."/>
            <person name="Mottagui-Tabar S."/>
            <person name="Mulder N."/>
            <person name="Nakano N."/>
            <person name="Nakauchi H."/>
            <person name="Ng P."/>
            <person name="Nilsson R."/>
            <person name="Nishiguchi S."/>
            <person name="Nishikawa S."/>
            <person name="Nori F."/>
            <person name="Ohara O."/>
            <person name="Okazaki Y."/>
            <person name="Orlando V."/>
            <person name="Pang K.C."/>
            <person name="Pavan W.J."/>
            <person name="Pavesi G."/>
            <person name="Pesole G."/>
            <person name="Petrovsky N."/>
            <person name="Piazza S."/>
            <person name="Reed J."/>
            <person name="Reid J.F."/>
            <person name="Ring B.Z."/>
            <person name="Ringwald M."/>
            <person name="Rost B."/>
            <person name="Ruan Y."/>
            <person name="Salzberg S.L."/>
            <person name="Sandelin A."/>
            <person name="Schneider C."/>
            <person name="Schoenbach C."/>
            <person name="Sekiguchi K."/>
            <person name="Semple C.A."/>
            <person name="Seno S."/>
            <person name="Sessa L."/>
            <person name="Sheng Y."/>
            <person name="Shibata Y."/>
            <person name="Shimada H."/>
            <person name="Shimada K."/>
            <person name="Silva D."/>
            <person name="Sinclair B."/>
            <person name="Sperling S."/>
            <person name="Stupka E."/>
            <person name="Sugiura K."/>
            <person name="Sultana R."/>
            <person name="Takenaka Y."/>
            <person name="Taki K."/>
            <person name="Tammoja K."/>
            <person name="Tan S.L."/>
            <person name="Tang S."/>
            <person name="Taylor M.S."/>
            <person name="Tegner J."/>
            <person name="Teichmann S.A."/>
            <person name="Ueda H.R."/>
            <person name="van Nimwegen E."/>
            <person name="Verardo R."/>
            <person name="Wei C.L."/>
            <person name="Yagi K."/>
            <person name="Yamanishi H."/>
            <person name="Zabarovsky E."/>
            <person name="Zhu S."/>
            <person name="Zimmer A."/>
            <person name="Hide W."/>
            <person name="Bult C."/>
            <person name="Grimmond S.M."/>
            <person name="Teasdale R.D."/>
            <person name="Liu E.T."/>
            <person name="Brusic V."/>
            <person name="Quackenbush J."/>
            <person name="Wahlestedt C."/>
            <person name="Mattick J.S."/>
            <person name="Hume D.A."/>
            <person name="Kai C."/>
            <person name="Sasaki D."/>
            <person name="Tomaru Y."/>
            <person name="Fukuda S."/>
            <person name="Kanamori-Katayama M."/>
            <person name="Suzuki M."/>
            <person name="Aoki J."/>
            <person name="Arakawa T."/>
            <person name="Iida J."/>
            <person name="Imamura K."/>
            <person name="Itoh M."/>
            <person name="Kato T."/>
            <person name="Kawaji H."/>
            <person name="Kawagashira N."/>
            <person name="Kawashima T."/>
            <person name="Kojima M."/>
            <person name="Kondo S."/>
            <person name="Konno H."/>
            <person name="Nakano K."/>
            <person name="Ninomiya N."/>
            <person name="Nishio T."/>
            <person name="Okada M."/>
            <person name="Plessy C."/>
            <person name="Shibata K."/>
            <person name="Shiraki T."/>
            <person name="Suzuki S."/>
            <person name="Tagami M."/>
            <person name="Waki K."/>
            <person name="Watahiki A."/>
            <person name="Okamura-Oho Y."/>
            <person name="Suzuki H."/>
            <person name="Kawai J."/>
            <person name="Hayashizaki Y."/>
        </authorList>
    </citation>
    <scope>NUCLEOTIDE SEQUENCE [LARGE SCALE MRNA] (ISOFORM 2)</scope>
    <source>
        <strain>C57BL/6J</strain>
        <tissue>Cerebellum</tissue>
        <tissue>Egg</tissue>
    </source>
</reference>
<reference key="3">
    <citation type="journal article" date="2004" name="Genome Res.">
        <title>The status, quality, and expansion of the NIH full-length cDNA project: the Mammalian Gene Collection (MGC).</title>
        <authorList>
            <consortium name="The MGC Project Team"/>
        </authorList>
    </citation>
    <scope>NUCLEOTIDE SEQUENCE [LARGE SCALE MRNA] OF 13-545 (ISOFORM 1)</scope>
    <source>
        <strain>FVB/N</strain>
        <tissue>Mammary tumor</tissue>
    </source>
</reference>
<reference key="4">
    <citation type="journal article" date="2007" name="Proc. Natl. Acad. Sci. U.S.A.">
        <title>Large-scale phosphorylation analysis of mouse liver.</title>
        <authorList>
            <person name="Villen J."/>
            <person name="Beausoleil S.A."/>
            <person name="Gerber S.A."/>
            <person name="Gygi S.P."/>
        </authorList>
    </citation>
    <scope>IDENTIFICATION BY MASS SPECTROMETRY [LARGE SCALE ANALYSIS]</scope>
    <source>
        <tissue>Liver</tissue>
    </source>
</reference>
<reference key="5">
    <citation type="journal article" date="2010" name="Cell">
        <title>A tissue-specific atlas of mouse protein phosphorylation and expression.</title>
        <authorList>
            <person name="Huttlin E.L."/>
            <person name="Jedrychowski M.P."/>
            <person name="Elias J.E."/>
            <person name="Goswami T."/>
            <person name="Rad R."/>
            <person name="Beausoleil S.A."/>
            <person name="Villen J."/>
            <person name="Haas W."/>
            <person name="Sowa M.E."/>
            <person name="Gygi S.P."/>
        </authorList>
    </citation>
    <scope>PHOSPHORYLATION [LARGE SCALE ANALYSIS] AT SER-142; SER-145 AND SER-147</scope>
    <scope>IDENTIFICATION BY MASS SPECTROMETRY [LARGE SCALE ANALYSIS]</scope>
    <source>
        <tissue>Lung</tissue>
        <tissue>Testis</tissue>
    </source>
</reference>
<gene>
    <name type="primary">Spats2</name>
    <name type="synonym">Scr59</name>
</gene>
<comment type="subcellular location">
    <subcellularLocation>
        <location evidence="3">Cytoplasm</location>
    </subcellularLocation>
</comment>
<comment type="alternative products">
    <event type="alternative splicing"/>
    <isoform>
        <id>Q8K1N4-1</id>
        <name>1</name>
        <sequence type="displayed"/>
    </isoform>
    <isoform>
        <id>Q8K1N4-2</id>
        <name>2</name>
        <sequence type="described" ref="VSP_028790 VSP_028791"/>
    </isoform>
</comment>
<comment type="tissue specificity">
    <text evidence="3">Detected in testis, in spermatocytes and round spermatids (at protein level). Highly expressed in testis, and detected at lower levels in brain, heart, thymus, skeletal muscle, ovary, stomach and lung.</text>
</comment>
<comment type="developmental stage">
    <text evidence="3">Detected in newborns. Levels increase during the first four weeks, and then remain at the same stable level.</text>
</comment>
<comment type="similarity">
    <text evidence="5">Belongs to the SPATS2 family.</text>
</comment>
<comment type="sequence caution" evidence="5">
    <conflict type="erroneous initiation">
        <sequence resource="EMBL-CDS" id="AAH23432"/>
    </conflict>
</comment>
<feature type="chain" id="PRO_0000307698" description="Spermatogenesis-associated serine-rich protein 2">
    <location>
        <begin position="1"/>
        <end position="545"/>
    </location>
</feature>
<feature type="region of interest" description="Disordered" evidence="2">
    <location>
        <begin position="87"/>
        <end position="133"/>
    </location>
</feature>
<feature type="region of interest" description="Disordered" evidence="2">
    <location>
        <begin position="202"/>
        <end position="232"/>
    </location>
</feature>
<feature type="region of interest" description="Disordered" evidence="2">
    <location>
        <begin position="390"/>
        <end position="545"/>
    </location>
</feature>
<feature type="compositionally biased region" description="Basic residues" evidence="2">
    <location>
        <begin position="87"/>
        <end position="96"/>
    </location>
</feature>
<feature type="compositionally biased region" description="Low complexity" evidence="2">
    <location>
        <begin position="97"/>
        <end position="107"/>
    </location>
</feature>
<feature type="compositionally biased region" description="Polar residues" evidence="2">
    <location>
        <begin position="108"/>
        <end position="126"/>
    </location>
</feature>
<feature type="compositionally biased region" description="Low complexity" evidence="2">
    <location>
        <begin position="391"/>
        <end position="413"/>
    </location>
</feature>
<feature type="compositionally biased region" description="Polar residues" evidence="2">
    <location>
        <begin position="455"/>
        <end position="464"/>
    </location>
</feature>
<feature type="modified residue" description="Phosphoserine" evidence="6">
    <location>
        <position position="142"/>
    </location>
</feature>
<feature type="modified residue" description="Phosphoserine" evidence="6">
    <location>
        <position position="145"/>
    </location>
</feature>
<feature type="modified residue" description="Phosphoserine" evidence="6">
    <location>
        <position position="147"/>
    </location>
</feature>
<feature type="modified residue" description="Phosphoserine" evidence="1">
    <location>
        <position position="520"/>
    </location>
</feature>
<feature type="splice variant" id="VSP_028790" description="In isoform 2." evidence="4">
    <original>HFVSERKYDEDLGRVARFTCDVETL</original>
    <variation>VKLPSSFIDSLDQPAQQISRSHGFT</variation>
    <location>
        <begin position="337"/>
        <end position="361"/>
    </location>
</feature>
<feature type="splice variant" id="VSP_028791" description="In isoform 2." evidence="4">
    <location>
        <begin position="362"/>
        <end position="545"/>
    </location>
</feature>
<accession>Q8K1N4</accession>
<accession>Q3UX77</accession>
<accession>Q8C810</accession>
<accession>Q8R1P6</accession>